<gene>
    <name evidence="1" type="primary">queF</name>
    <name type="ordered locus">Aave_1170</name>
</gene>
<organism>
    <name type="scientific">Paracidovorax citrulli (strain AAC00-1)</name>
    <name type="common">Acidovorax citrulli</name>
    <dbReference type="NCBI Taxonomy" id="397945"/>
    <lineage>
        <taxon>Bacteria</taxon>
        <taxon>Pseudomonadati</taxon>
        <taxon>Pseudomonadota</taxon>
        <taxon>Betaproteobacteria</taxon>
        <taxon>Burkholderiales</taxon>
        <taxon>Comamonadaceae</taxon>
        <taxon>Paracidovorax</taxon>
    </lineage>
</organism>
<keyword id="KW-0963">Cytoplasm</keyword>
<keyword id="KW-0521">NADP</keyword>
<keyword id="KW-0560">Oxidoreductase</keyword>
<keyword id="KW-0671">Queuosine biosynthesis</keyword>
<dbReference type="EC" id="1.7.1.13" evidence="1"/>
<dbReference type="EMBL" id="CP000512">
    <property type="protein sequence ID" value="ABM31762.1"/>
    <property type="molecule type" value="Genomic_DNA"/>
</dbReference>
<dbReference type="RefSeq" id="WP_011794315.1">
    <property type="nucleotide sequence ID" value="NC_008752.1"/>
</dbReference>
<dbReference type="SMR" id="A1TLC4"/>
<dbReference type="STRING" id="397945.Aave_1170"/>
<dbReference type="KEGG" id="aav:Aave_1170"/>
<dbReference type="eggNOG" id="COG0780">
    <property type="taxonomic scope" value="Bacteria"/>
</dbReference>
<dbReference type="eggNOG" id="COG2904">
    <property type="taxonomic scope" value="Bacteria"/>
</dbReference>
<dbReference type="HOGENOM" id="CLU_054738_0_0_4"/>
<dbReference type="OrthoDB" id="9789995at2"/>
<dbReference type="UniPathway" id="UPA00392"/>
<dbReference type="Proteomes" id="UP000002596">
    <property type="component" value="Chromosome"/>
</dbReference>
<dbReference type="GO" id="GO:0005737">
    <property type="term" value="C:cytoplasm"/>
    <property type="evidence" value="ECO:0007669"/>
    <property type="project" value="UniProtKB-SubCell"/>
</dbReference>
<dbReference type="GO" id="GO:0033739">
    <property type="term" value="F:preQ1 synthase activity"/>
    <property type="evidence" value="ECO:0007669"/>
    <property type="project" value="UniProtKB-UniRule"/>
</dbReference>
<dbReference type="GO" id="GO:0008616">
    <property type="term" value="P:queuosine biosynthetic process"/>
    <property type="evidence" value="ECO:0007669"/>
    <property type="project" value="UniProtKB-UniRule"/>
</dbReference>
<dbReference type="GO" id="GO:0006400">
    <property type="term" value="P:tRNA modification"/>
    <property type="evidence" value="ECO:0007669"/>
    <property type="project" value="UniProtKB-UniRule"/>
</dbReference>
<dbReference type="Gene3D" id="3.30.1130.10">
    <property type="match status" value="2"/>
</dbReference>
<dbReference type="HAMAP" id="MF_00817">
    <property type="entry name" value="QueF_type2"/>
    <property type="match status" value="1"/>
</dbReference>
<dbReference type="InterPro" id="IPR043133">
    <property type="entry name" value="GTP-CH-I_C/QueF"/>
</dbReference>
<dbReference type="InterPro" id="IPR050084">
    <property type="entry name" value="NADPH_dep_7-cyano-7-deazaG_red"/>
</dbReference>
<dbReference type="InterPro" id="IPR029500">
    <property type="entry name" value="QueF"/>
</dbReference>
<dbReference type="InterPro" id="IPR029139">
    <property type="entry name" value="QueF_N"/>
</dbReference>
<dbReference type="InterPro" id="IPR016428">
    <property type="entry name" value="QueF_type2"/>
</dbReference>
<dbReference type="NCBIfam" id="TIGR03138">
    <property type="entry name" value="QueF"/>
    <property type="match status" value="1"/>
</dbReference>
<dbReference type="PANTHER" id="PTHR34354">
    <property type="entry name" value="NADPH-DEPENDENT 7-CYANO-7-DEAZAGUANINE REDUCTASE"/>
    <property type="match status" value="1"/>
</dbReference>
<dbReference type="PANTHER" id="PTHR34354:SF1">
    <property type="entry name" value="NADPH-DEPENDENT 7-CYANO-7-DEAZAGUANINE REDUCTASE"/>
    <property type="match status" value="1"/>
</dbReference>
<dbReference type="Pfam" id="PF14489">
    <property type="entry name" value="QueF"/>
    <property type="match status" value="1"/>
</dbReference>
<dbReference type="Pfam" id="PF14819">
    <property type="entry name" value="QueF_N"/>
    <property type="match status" value="1"/>
</dbReference>
<dbReference type="PIRSF" id="PIRSF004750">
    <property type="entry name" value="Nitrile_oxidored_YqcD_prd"/>
    <property type="match status" value="1"/>
</dbReference>
<dbReference type="SUPFAM" id="SSF55620">
    <property type="entry name" value="Tetrahydrobiopterin biosynthesis enzymes-like"/>
    <property type="match status" value="1"/>
</dbReference>
<feature type="chain" id="PRO_1000062324" description="NADPH-dependent 7-cyano-7-deazaguanine reductase">
    <location>
        <begin position="1"/>
        <end position="281"/>
    </location>
</feature>
<feature type="active site" description="Thioimide intermediate" evidence="1">
    <location>
        <position position="188"/>
    </location>
</feature>
<feature type="active site" description="Proton donor" evidence="1">
    <location>
        <position position="195"/>
    </location>
</feature>
<feature type="binding site" evidence="1">
    <location>
        <begin position="81"/>
        <end position="83"/>
    </location>
    <ligand>
        <name>substrate</name>
    </ligand>
</feature>
<feature type="binding site" evidence="1">
    <location>
        <begin position="83"/>
        <end position="84"/>
    </location>
    <ligand>
        <name>NADPH</name>
        <dbReference type="ChEBI" id="CHEBI:57783"/>
    </ligand>
</feature>
<feature type="binding site" evidence="1">
    <location>
        <begin position="227"/>
        <end position="228"/>
    </location>
    <ligand>
        <name>substrate</name>
    </ligand>
</feature>
<feature type="binding site" evidence="1">
    <location>
        <begin position="256"/>
        <end position="257"/>
    </location>
    <ligand>
        <name>NADPH</name>
        <dbReference type="ChEBI" id="CHEBI:57783"/>
    </ligand>
</feature>
<name>QUEF_PARC0</name>
<protein>
    <recommendedName>
        <fullName evidence="1">NADPH-dependent 7-cyano-7-deazaguanine reductase</fullName>
        <ecNumber evidence="1">1.7.1.13</ecNumber>
    </recommendedName>
    <alternativeName>
        <fullName evidence="1">7-cyano-7-carbaguanine reductase</fullName>
    </alternativeName>
    <alternativeName>
        <fullName evidence="1">NADPH-dependent nitrile oxidoreductase</fullName>
    </alternativeName>
    <alternativeName>
        <fullName evidence="1">PreQ(0) reductase</fullName>
    </alternativeName>
</protein>
<accession>A1TLC4</accession>
<reference key="1">
    <citation type="submission" date="2006-12" db="EMBL/GenBank/DDBJ databases">
        <title>Complete sequence of Acidovorax avenae subsp. citrulli AAC00-1.</title>
        <authorList>
            <person name="Copeland A."/>
            <person name="Lucas S."/>
            <person name="Lapidus A."/>
            <person name="Barry K."/>
            <person name="Detter J.C."/>
            <person name="Glavina del Rio T."/>
            <person name="Dalin E."/>
            <person name="Tice H."/>
            <person name="Pitluck S."/>
            <person name="Kiss H."/>
            <person name="Brettin T."/>
            <person name="Bruce D."/>
            <person name="Han C."/>
            <person name="Tapia R."/>
            <person name="Gilna P."/>
            <person name="Schmutz J."/>
            <person name="Larimer F."/>
            <person name="Land M."/>
            <person name="Hauser L."/>
            <person name="Kyrpides N."/>
            <person name="Kim E."/>
            <person name="Stahl D."/>
            <person name="Richardson P."/>
        </authorList>
    </citation>
    <scope>NUCLEOTIDE SEQUENCE [LARGE SCALE GENOMIC DNA]</scope>
    <source>
        <strain>AAC00-1</strain>
    </source>
</reference>
<proteinExistence type="inferred from homology"/>
<sequence length="281" mass="31823">MNTPDQSQLGRVSGYADQYDASLLFPLPRQPKRHEIGVTGTPPFFGADLWTAFELSWLNLRGKPQVALAHITVPCETPNIIESKSFKLYLNSFNNTRFADAAQVQTRIRTDISEAAWRGSDRQATVGVKLVLPEMFDREPVQELDGLLLDRLDVECTHYTPAPELLHANHGEAPVTETLTSHLLKSNCLVTGQPDWGSVRIEYSGAQIDQSGLLRYLVSFRNHNEFHEQCVERIFMDLWTRCRPIKLSVYARYTRRGGLDINPLRTSHPQALPANVRTARQ</sequence>
<evidence type="ECO:0000255" key="1">
    <source>
        <dbReference type="HAMAP-Rule" id="MF_00817"/>
    </source>
</evidence>
<comment type="function">
    <text evidence="1">Catalyzes the NADPH-dependent reduction of 7-cyano-7-deazaguanine (preQ0) to 7-aminomethyl-7-deazaguanine (preQ1).</text>
</comment>
<comment type="catalytic activity">
    <reaction evidence="1">
        <text>7-aminomethyl-7-carbaguanine + 2 NADP(+) = 7-cyano-7-deazaguanine + 2 NADPH + 3 H(+)</text>
        <dbReference type="Rhea" id="RHEA:13409"/>
        <dbReference type="ChEBI" id="CHEBI:15378"/>
        <dbReference type="ChEBI" id="CHEBI:45075"/>
        <dbReference type="ChEBI" id="CHEBI:57783"/>
        <dbReference type="ChEBI" id="CHEBI:58349"/>
        <dbReference type="ChEBI" id="CHEBI:58703"/>
        <dbReference type="EC" id="1.7.1.13"/>
    </reaction>
</comment>
<comment type="pathway">
    <text evidence="1">tRNA modification; tRNA-queuosine biosynthesis.</text>
</comment>
<comment type="subunit">
    <text evidence="1">Homodimer.</text>
</comment>
<comment type="subcellular location">
    <subcellularLocation>
        <location evidence="1">Cytoplasm</location>
    </subcellularLocation>
</comment>
<comment type="similarity">
    <text evidence="1">Belongs to the GTP cyclohydrolase I family. QueF type 2 subfamily.</text>
</comment>